<evidence type="ECO:0000255" key="1">
    <source>
        <dbReference type="HAMAP-Rule" id="MF_00600"/>
    </source>
</evidence>
<evidence type="ECO:0000256" key="2">
    <source>
        <dbReference type="SAM" id="MobiDB-lite"/>
    </source>
</evidence>
<protein>
    <recommendedName>
        <fullName evidence="1">Chaperonin GroEL</fullName>
        <ecNumber evidence="1">5.6.1.7</ecNumber>
    </recommendedName>
    <alternativeName>
        <fullName evidence="1">60 kDa chaperonin</fullName>
    </alternativeName>
    <alternativeName>
        <fullName evidence="1">Chaperonin-60</fullName>
        <shortName evidence="1">Cpn60</shortName>
    </alternativeName>
</protein>
<accession>Q93GT6</accession>
<gene>
    <name evidence="1" type="primary">groEL</name>
    <name evidence="1" type="synonym">groL</name>
</gene>
<organism>
    <name type="scientific">Tetragenococcus halophilus</name>
    <name type="common">Pediococcus halophilus</name>
    <dbReference type="NCBI Taxonomy" id="51669"/>
    <lineage>
        <taxon>Bacteria</taxon>
        <taxon>Bacillati</taxon>
        <taxon>Bacillota</taxon>
        <taxon>Bacilli</taxon>
        <taxon>Lactobacillales</taxon>
        <taxon>Enterococcaceae</taxon>
        <taxon>Tetragenococcus</taxon>
    </lineage>
</organism>
<reference key="1">
    <citation type="journal article" date="2002" name="Biosci. Biotechnol. Biochem.">
        <title>The groESL operon of the halophilic lactic acid bacterium Tetragenococcus halophila.</title>
        <authorList>
            <person name="Fukuda D."/>
            <person name="Watanabe M."/>
            <person name="Aso Y."/>
            <person name="Sonomoto K."/>
            <person name="Ishizaki A."/>
        </authorList>
    </citation>
    <scope>NUCLEOTIDE SEQUENCE [GENOMIC DNA]</scope>
</reference>
<reference key="2">
    <citation type="submission" date="2004-07" db="EMBL/GenBank/DDBJ databases">
        <authorList>
            <person name="Nakayama J."/>
            <person name="Fukuda D."/>
            <person name="Watanabe M."/>
            <person name="Aso Y."/>
            <person name="Sonomoto K."/>
            <person name="Ishizaki A."/>
        </authorList>
    </citation>
    <scope>SEQUENCE REVISION TO 100-103; 281; 387-389 AND C-TERMINUS</scope>
</reference>
<comment type="function">
    <text evidence="1">Together with its co-chaperonin GroES, plays an essential role in assisting protein folding. The GroEL-GroES system forms a nano-cage that allows encapsulation of the non-native substrate proteins and provides a physical environment optimized to promote and accelerate protein folding.</text>
</comment>
<comment type="catalytic activity">
    <reaction evidence="1">
        <text>ATP + H2O + a folded polypeptide = ADP + phosphate + an unfolded polypeptide.</text>
        <dbReference type="EC" id="5.6.1.7"/>
    </reaction>
</comment>
<comment type="subunit">
    <text evidence="1">Forms a cylinder of 14 subunits composed of two heptameric rings stacked back-to-back. Interacts with the co-chaperonin GroES.</text>
</comment>
<comment type="subcellular location">
    <subcellularLocation>
        <location evidence="1">Cytoplasm</location>
    </subcellularLocation>
</comment>
<comment type="similarity">
    <text evidence="1">Belongs to the chaperonin (HSP60) family.</text>
</comment>
<feature type="chain" id="PRO_0000063577" description="Chaperonin GroEL">
    <location>
        <begin position="1"/>
        <end position="546"/>
    </location>
</feature>
<feature type="region of interest" description="Disordered" evidence="2">
    <location>
        <begin position="521"/>
        <end position="546"/>
    </location>
</feature>
<feature type="binding site" evidence="1">
    <location>
        <begin position="29"/>
        <end position="32"/>
    </location>
    <ligand>
        <name>ATP</name>
        <dbReference type="ChEBI" id="CHEBI:30616"/>
    </ligand>
</feature>
<feature type="binding site" evidence="1">
    <location>
        <begin position="86"/>
        <end position="90"/>
    </location>
    <ligand>
        <name>ATP</name>
        <dbReference type="ChEBI" id="CHEBI:30616"/>
    </ligand>
</feature>
<feature type="binding site" evidence="1">
    <location>
        <position position="413"/>
    </location>
    <ligand>
        <name>ATP</name>
        <dbReference type="ChEBI" id="CHEBI:30616"/>
    </ligand>
</feature>
<feature type="binding site" evidence="1">
    <location>
        <begin position="476"/>
        <end position="478"/>
    </location>
    <ligand>
        <name>ATP</name>
        <dbReference type="ChEBI" id="CHEBI:30616"/>
    </ligand>
</feature>
<feature type="binding site" evidence="1">
    <location>
        <position position="492"/>
    </location>
    <ligand>
        <name>ATP</name>
        <dbReference type="ChEBI" id="CHEBI:30616"/>
    </ligand>
</feature>
<keyword id="KW-0067">ATP-binding</keyword>
<keyword id="KW-0143">Chaperone</keyword>
<keyword id="KW-0963">Cytoplasm</keyword>
<keyword id="KW-0413">Isomerase</keyword>
<keyword id="KW-0547">Nucleotide-binding</keyword>
<dbReference type="EC" id="5.6.1.7" evidence="1"/>
<dbReference type="EMBL" id="AB073399">
    <property type="protein sequence ID" value="BAB70661.2"/>
    <property type="molecule type" value="Genomic_DNA"/>
</dbReference>
<dbReference type="PIR" id="JC7858">
    <property type="entry name" value="JC7858"/>
</dbReference>
<dbReference type="SMR" id="Q93GT6"/>
<dbReference type="GO" id="GO:0005737">
    <property type="term" value="C:cytoplasm"/>
    <property type="evidence" value="ECO:0007669"/>
    <property type="project" value="UniProtKB-SubCell"/>
</dbReference>
<dbReference type="GO" id="GO:0005524">
    <property type="term" value="F:ATP binding"/>
    <property type="evidence" value="ECO:0007669"/>
    <property type="project" value="UniProtKB-UniRule"/>
</dbReference>
<dbReference type="GO" id="GO:0140662">
    <property type="term" value="F:ATP-dependent protein folding chaperone"/>
    <property type="evidence" value="ECO:0007669"/>
    <property type="project" value="InterPro"/>
</dbReference>
<dbReference type="GO" id="GO:0016853">
    <property type="term" value="F:isomerase activity"/>
    <property type="evidence" value="ECO:0007669"/>
    <property type="project" value="UniProtKB-KW"/>
</dbReference>
<dbReference type="GO" id="GO:0051082">
    <property type="term" value="F:unfolded protein binding"/>
    <property type="evidence" value="ECO:0007669"/>
    <property type="project" value="UniProtKB-UniRule"/>
</dbReference>
<dbReference type="GO" id="GO:0042026">
    <property type="term" value="P:protein refolding"/>
    <property type="evidence" value="ECO:0007669"/>
    <property type="project" value="UniProtKB-UniRule"/>
</dbReference>
<dbReference type="CDD" id="cd03344">
    <property type="entry name" value="GroEL"/>
    <property type="match status" value="1"/>
</dbReference>
<dbReference type="FunFam" id="3.50.7.10:FF:000001">
    <property type="entry name" value="60 kDa chaperonin"/>
    <property type="match status" value="1"/>
</dbReference>
<dbReference type="Gene3D" id="3.50.7.10">
    <property type="entry name" value="GroEL"/>
    <property type="match status" value="1"/>
</dbReference>
<dbReference type="Gene3D" id="1.10.560.10">
    <property type="entry name" value="GroEL-like equatorial domain"/>
    <property type="match status" value="1"/>
</dbReference>
<dbReference type="Gene3D" id="3.30.260.10">
    <property type="entry name" value="TCP-1-like chaperonin intermediate domain"/>
    <property type="match status" value="1"/>
</dbReference>
<dbReference type="HAMAP" id="MF_00600">
    <property type="entry name" value="CH60"/>
    <property type="match status" value="1"/>
</dbReference>
<dbReference type="InterPro" id="IPR001844">
    <property type="entry name" value="Cpn60/GroEL"/>
</dbReference>
<dbReference type="InterPro" id="IPR002423">
    <property type="entry name" value="Cpn60/GroEL/TCP-1"/>
</dbReference>
<dbReference type="InterPro" id="IPR027409">
    <property type="entry name" value="GroEL-like_apical_dom_sf"/>
</dbReference>
<dbReference type="InterPro" id="IPR027413">
    <property type="entry name" value="GROEL-like_equatorial_sf"/>
</dbReference>
<dbReference type="InterPro" id="IPR027410">
    <property type="entry name" value="TCP-1-like_intermed_sf"/>
</dbReference>
<dbReference type="NCBIfam" id="TIGR02348">
    <property type="entry name" value="GroEL"/>
    <property type="match status" value="1"/>
</dbReference>
<dbReference type="NCBIfam" id="NF000592">
    <property type="entry name" value="PRK00013.1"/>
    <property type="match status" value="1"/>
</dbReference>
<dbReference type="NCBIfam" id="NF009487">
    <property type="entry name" value="PRK12849.1"/>
    <property type="match status" value="1"/>
</dbReference>
<dbReference type="NCBIfam" id="NF009488">
    <property type="entry name" value="PRK12850.1"/>
    <property type="match status" value="1"/>
</dbReference>
<dbReference type="NCBIfam" id="NF009489">
    <property type="entry name" value="PRK12851.1"/>
    <property type="match status" value="1"/>
</dbReference>
<dbReference type="PANTHER" id="PTHR45633">
    <property type="entry name" value="60 KDA HEAT SHOCK PROTEIN, MITOCHONDRIAL"/>
    <property type="match status" value="1"/>
</dbReference>
<dbReference type="Pfam" id="PF00118">
    <property type="entry name" value="Cpn60_TCP1"/>
    <property type="match status" value="1"/>
</dbReference>
<dbReference type="PRINTS" id="PR00298">
    <property type="entry name" value="CHAPERONIN60"/>
</dbReference>
<dbReference type="SUPFAM" id="SSF52029">
    <property type="entry name" value="GroEL apical domain-like"/>
    <property type="match status" value="1"/>
</dbReference>
<dbReference type="SUPFAM" id="SSF48592">
    <property type="entry name" value="GroEL equatorial domain-like"/>
    <property type="match status" value="1"/>
</dbReference>
<dbReference type="SUPFAM" id="SSF54849">
    <property type="entry name" value="GroEL-intermediate domain like"/>
    <property type="match status" value="1"/>
</dbReference>
<proteinExistence type="inferred from homology"/>
<sequence length="546" mass="57804">MAKDIKFSEDARRSMLNGVSKLADTVKVTLGPRGRNVVLEKSYGSPLITNDGVTIAKEIELENRFENMGAQLVSEVASKTNDIAGDGTTTATVLAQSIVSEGLKNVTSGANPLGIRRGIEQATQKAVEELQNISTPVESKEAIVQVGEVSSGSKQVGQYIADAMDKVGNDGVITIEDSQGIDTELDVVEGMQFDRGYLSQYMVTDNEKMEADLDSPYILITDKKISNIQDILPLLEQVVQESKPLLIIADDIDGEALPTLVLNKIRGTFNVVATKAPGFGDRRKAMLEDIAVLTGATVITEDLGLELKDATMDSLGKANKVTVDKDNTTIVEGAGDSTAIEDRVQLIKNQVAETTSDFDREKLQERLAKLAGGVAVIKVGAATETEQKELKLRIEDALNAARAGVEEGMVSGGGTALVNVINKVAELDADDDAITGVNIVLRALEEPVRQISENAGFEGSVIIEKLKSEKLGIGFNAATGQWVNMVDAGIVDPTKVVRSALQNAASISALLLSTEAVIADRPDESGNDAGAGAQGMDPSMMGGGMM</sequence>
<name>CH60_TETHA</name>